<feature type="initiator methionine" description="Removed">
    <location>
        <position position="1"/>
    </location>
</feature>
<feature type="chain" id="PRO_0000052896" description="Hemoglobin subunit beta-2">
    <location>
        <begin position="2"/>
        <end position="148"/>
    </location>
</feature>
<feature type="domain" description="Globin" evidence="1">
    <location>
        <begin position="3"/>
        <end position="148"/>
    </location>
</feature>
<feature type="binding site" description="distal binding residue" evidence="1">
    <location>
        <position position="64"/>
    </location>
    <ligand>
        <name>heme b</name>
        <dbReference type="ChEBI" id="CHEBI:60344"/>
    </ligand>
    <ligandPart>
        <name>Fe</name>
        <dbReference type="ChEBI" id="CHEBI:18248"/>
    </ligandPart>
</feature>
<feature type="binding site" description="proximal binding residue" evidence="1">
    <location>
        <position position="93"/>
    </location>
    <ligand>
        <name>heme b</name>
        <dbReference type="ChEBI" id="CHEBI:60344"/>
    </ligand>
    <ligandPart>
        <name>Fe</name>
        <dbReference type="ChEBI" id="CHEBI:18248"/>
    </ligandPart>
</feature>
<feature type="sequence conflict" description="In Ref. 3; AAH53176." evidence="3" ref="3">
    <original>G</original>
    <variation>A</variation>
    <location>
        <position position="25"/>
    </location>
</feature>
<evidence type="ECO:0000255" key="1">
    <source>
        <dbReference type="PROSITE-ProRule" id="PRU00238"/>
    </source>
</evidence>
<evidence type="ECO:0000269" key="2">
    <source>
    </source>
</evidence>
<evidence type="ECO:0000305" key="3"/>
<evidence type="ECO:0000312" key="4">
    <source>
        <dbReference type="EMBL" id="AAB05402.1"/>
    </source>
</evidence>
<evidence type="ECO:0000312" key="5">
    <source>
        <dbReference type="EMBL" id="AAH53176.1"/>
    </source>
</evidence>
<evidence type="ECO:0000312" key="6">
    <source>
        <dbReference type="EMBL" id="AAH59624.1"/>
    </source>
</evidence>
<evidence type="ECO:0000312" key="7">
    <source>
        <dbReference type="EMBL" id="AAH76356.1"/>
    </source>
</evidence>
<evidence type="ECO:0000312" key="8">
    <source>
        <dbReference type="EMBL" id="CAE30441.1"/>
    </source>
</evidence>
<keyword id="KW-0903">Direct protein sequencing</keyword>
<keyword id="KW-0349">Heme</keyword>
<keyword id="KW-0408">Iron</keyword>
<keyword id="KW-0479">Metal-binding</keyword>
<keyword id="KW-0561">Oxygen transport</keyword>
<keyword id="KW-1185">Reference proteome</keyword>
<keyword id="KW-0813">Transport</keyword>
<proteinExistence type="evidence at protein level"/>
<sequence length="148" mass="16389">MVEWTDAERTAILGLWGKLNIDEIGPQALSRCLIVYPWTQRYFATFGNLSSPAAIMGNPKVAAHGRTVMGGLERAIKNMDNIKNTYAALSVMHSEKLHVDPDNFKLLADCITVCAAMKFGQAGFNADIQEAWQKFLAVVVSALCRQYH</sequence>
<reference evidence="3 4" key="1">
    <citation type="journal article" date="1997" name="Blood">
        <title>Characterization of adult alpha- and beta-globin genes in the zebrafish.</title>
        <authorList>
            <person name="Chan F.-Y."/>
            <person name="Robinson J."/>
            <person name="Brownlie A."/>
            <person name="Shivdasani R.A."/>
            <person name="Donovan A."/>
            <person name="Brugnara C."/>
            <person name="Kim J."/>
            <person name="Lau B.-C."/>
            <person name="Witkowska H.E."/>
            <person name="Zon L.I."/>
        </authorList>
    </citation>
    <scope>NUCLEOTIDE SEQUENCE [MRNA] (BA2)</scope>
    <scope>PARTIAL PROTEIN SEQUENCE</scope>
    <scope>MASS SPECTROMETRY</scope>
    <source>
        <tissue evidence="2">Spleen</tissue>
    </source>
</reference>
<reference key="2">
    <citation type="journal article" date="2013" name="Nature">
        <title>The zebrafish reference genome sequence and its relationship to the human genome.</title>
        <authorList>
            <person name="Howe K."/>
            <person name="Clark M.D."/>
            <person name="Torroja C.F."/>
            <person name="Torrance J."/>
            <person name="Berthelot C."/>
            <person name="Muffato M."/>
            <person name="Collins J.E."/>
            <person name="Humphray S."/>
            <person name="McLaren K."/>
            <person name="Matthews L."/>
            <person name="McLaren S."/>
            <person name="Sealy I."/>
            <person name="Caccamo M."/>
            <person name="Churcher C."/>
            <person name="Scott C."/>
            <person name="Barrett J.C."/>
            <person name="Koch R."/>
            <person name="Rauch G.J."/>
            <person name="White S."/>
            <person name="Chow W."/>
            <person name="Kilian B."/>
            <person name="Quintais L.T."/>
            <person name="Guerra-Assuncao J.A."/>
            <person name="Zhou Y."/>
            <person name="Gu Y."/>
            <person name="Yen J."/>
            <person name="Vogel J.H."/>
            <person name="Eyre T."/>
            <person name="Redmond S."/>
            <person name="Banerjee R."/>
            <person name="Chi J."/>
            <person name="Fu B."/>
            <person name="Langley E."/>
            <person name="Maguire S.F."/>
            <person name="Laird G.K."/>
            <person name="Lloyd D."/>
            <person name="Kenyon E."/>
            <person name="Donaldson S."/>
            <person name="Sehra H."/>
            <person name="Almeida-King J."/>
            <person name="Loveland J."/>
            <person name="Trevanion S."/>
            <person name="Jones M."/>
            <person name="Quail M."/>
            <person name="Willey D."/>
            <person name="Hunt A."/>
            <person name="Burton J."/>
            <person name="Sims S."/>
            <person name="McLay K."/>
            <person name="Plumb B."/>
            <person name="Davis J."/>
            <person name="Clee C."/>
            <person name="Oliver K."/>
            <person name="Clark R."/>
            <person name="Riddle C."/>
            <person name="Elliot D."/>
            <person name="Threadgold G."/>
            <person name="Harden G."/>
            <person name="Ware D."/>
            <person name="Begum S."/>
            <person name="Mortimore B."/>
            <person name="Kerry G."/>
            <person name="Heath P."/>
            <person name="Phillimore B."/>
            <person name="Tracey A."/>
            <person name="Corby N."/>
            <person name="Dunn M."/>
            <person name="Johnson C."/>
            <person name="Wood J."/>
            <person name="Clark S."/>
            <person name="Pelan S."/>
            <person name="Griffiths G."/>
            <person name="Smith M."/>
            <person name="Glithero R."/>
            <person name="Howden P."/>
            <person name="Barker N."/>
            <person name="Lloyd C."/>
            <person name="Stevens C."/>
            <person name="Harley J."/>
            <person name="Holt K."/>
            <person name="Panagiotidis G."/>
            <person name="Lovell J."/>
            <person name="Beasley H."/>
            <person name="Henderson C."/>
            <person name="Gordon D."/>
            <person name="Auger K."/>
            <person name="Wright D."/>
            <person name="Collins J."/>
            <person name="Raisen C."/>
            <person name="Dyer L."/>
            <person name="Leung K."/>
            <person name="Robertson L."/>
            <person name="Ambridge K."/>
            <person name="Leongamornlert D."/>
            <person name="McGuire S."/>
            <person name="Gilderthorp R."/>
            <person name="Griffiths C."/>
            <person name="Manthravadi D."/>
            <person name="Nichol S."/>
            <person name="Barker G."/>
            <person name="Whitehead S."/>
            <person name="Kay M."/>
            <person name="Brown J."/>
            <person name="Murnane C."/>
            <person name="Gray E."/>
            <person name="Humphries M."/>
            <person name="Sycamore N."/>
            <person name="Barker D."/>
            <person name="Saunders D."/>
            <person name="Wallis J."/>
            <person name="Babbage A."/>
            <person name="Hammond S."/>
            <person name="Mashreghi-Mohammadi M."/>
            <person name="Barr L."/>
            <person name="Martin S."/>
            <person name="Wray P."/>
            <person name="Ellington A."/>
            <person name="Matthews N."/>
            <person name="Ellwood M."/>
            <person name="Woodmansey R."/>
            <person name="Clark G."/>
            <person name="Cooper J."/>
            <person name="Tromans A."/>
            <person name="Grafham D."/>
            <person name="Skuce C."/>
            <person name="Pandian R."/>
            <person name="Andrews R."/>
            <person name="Harrison E."/>
            <person name="Kimberley A."/>
            <person name="Garnett J."/>
            <person name="Fosker N."/>
            <person name="Hall R."/>
            <person name="Garner P."/>
            <person name="Kelly D."/>
            <person name="Bird C."/>
            <person name="Palmer S."/>
            <person name="Gehring I."/>
            <person name="Berger A."/>
            <person name="Dooley C.M."/>
            <person name="Ersan-Urun Z."/>
            <person name="Eser C."/>
            <person name="Geiger H."/>
            <person name="Geisler M."/>
            <person name="Karotki L."/>
            <person name="Kirn A."/>
            <person name="Konantz J."/>
            <person name="Konantz M."/>
            <person name="Oberlander M."/>
            <person name="Rudolph-Geiger S."/>
            <person name="Teucke M."/>
            <person name="Lanz C."/>
            <person name="Raddatz G."/>
            <person name="Osoegawa K."/>
            <person name="Zhu B."/>
            <person name="Rapp A."/>
            <person name="Widaa S."/>
            <person name="Langford C."/>
            <person name="Yang F."/>
            <person name="Schuster S.C."/>
            <person name="Carter N.P."/>
            <person name="Harrow J."/>
            <person name="Ning Z."/>
            <person name="Herrero J."/>
            <person name="Searle S.M."/>
            <person name="Enright A."/>
            <person name="Geisler R."/>
            <person name="Plasterk R.H."/>
            <person name="Lee C."/>
            <person name="Westerfield M."/>
            <person name="de Jong P.J."/>
            <person name="Zon L.I."/>
            <person name="Postlethwait J.H."/>
            <person name="Nusslein-Volhard C."/>
            <person name="Hubbard T.J."/>
            <person name="Roest Crollius H."/>
            <person name="Rogers J."/>
            <person name="Stemple D.L."/>
        </authorList>
    </citation>
    <scope>NUCLEOTIDE SEQUENCE [LARGE SCALE GENOMIC DNA] (BA2 AND BA2L)</scope>
    <source>
        <strain>Tuebingen</strain>
    </source>
</reference>
<reference evidence="3 8" key="3">
    <citation type="submission" date="2004-07" db="EMBL/GenBank/DDBJ databases">
        <authorList>
            <consortium name="NIH - Zebrafish Gene Collection (ZGC) project"/>
        </authorList>
    </citation>
    <scope>NUCLEOTIDE SEQUENCE [LARGE SCALE MRNA] (BA2 AND BA2L)</scope>
    <source>
        <tissue evidence="7">Brain</tissue>
        <tissue evidence="5">Kidney</tissue>
        <tissue evidence="6">Retina</tissue>
    </source>
</reference>
<comment type="function">
    <text>Involved in oxygen transport from gills to the various peripheral tissues.</text>
</comment>
<comment type="subunit">
    <text evidence="3">Heterotetramer of two alpha chains and two beta chains.</text>
</comment>
<comment type="tissue specificity">
    <text evidence="3">Red blood cells.</text>
</comment>
<comment type="mass spectrometry" mass="16258.2" method="Electrospray" evidence="2"/>
<comment type="similarity">
    <text evidence="1">Belongs to the globin family.</text>
</comment>
<protein>
    <recommendedName>
        <fullName>Hemoglobin subunit beta-2</fullName>
    </recommendedName>
    <alternativeName>
        <fullName>Beta-2-globin</fullName>
    </alternativeName>
    <alternativeName>
        <fullName>Beta-A2-globin</fullName>
    </alternativeName>
    <alternativeName>
        <fullName>Hemoglobin beta-2 chain</fullName>
    </alternativeName>
</protein>
<dbReference type="EMBL" id="U50379">
    <property type="protein sequence ID" value="AAB05402.1"/>
    <property type="molecule type" value="mRNA"/>
</dbReference>
<dbReference type="EMBL" id="BX004811">
    <property type="protein sequence ID" value="CAE30441.1"/>
    <property type="molecule type" value="Genomic_DNA"/>
</dbReference>
<dbReference type="EMBL" id="BX004811">
    <property type="protein sequence ID" value="CAE30439.1"/>
    <property type="molecule type" value="Genomic_DNA"/>
</dbReference>
<dbReference type="EMBL" id="BC053176">
    <property type="protein sequence ID" value="AAH53176.1"/>
    <property type="molecule type" value="mRNA"/>
</dbReference>
<dbReference type="EMBL" id="BC059624">
    <property type="protein sequence ID" value="AAH59624.1"/>
    <property type="molecule type" value="mRNA"/>
</dbReference>
<dbReference type="EMBL" id="BC076356">
    <property type="protein sequence ID" value="AAH76356.1"/>
    <property type="molecule type" value="mRNA"/>
</dbReference>
<dbReference type="RefSeq" id="NP_001005403.1">
    <property type="nucleotide sequence ID" value="NM_001005403.1"/>
</dbReference>
<dbReference type="SMR" id="Q90485"/>
<dbReference type="FunCoup" id="Q90485">
    <property type="interactions" value="1059"/>
</dbReference>
<dbReference type="IntAct" id="Q90485">
    <property type="interactions" value="1"/>
</dbReference>
<dbReference type="MINT" id="Q90485"/>
<dbReference type="InParanoid" id="Q90485"/>
<dbReference type="PhylomeDB" id="Q90485"/>
<dbReference type="PRO" id="PR:Q90485"/>
<dbReference type="Proteomes" id="UP000000437">
    <property type="component" value="Unplaced"/>
</dbReference>
<dbReference type="GO" id="GO:0031838">
    <property type="term" value="C:haptoglobin-hemoglobin complex"/>
    <property type="evidence" value="ECO:0000318"/>
    <property type="project" value="GO_Central"/>
</dbReference>
<dbReference type="GO" id="GO:0005833">
    <property type="term" value="C:hemoglobin complex"/>
    <property type="evidence" value="ECO:0000250"/>
    <property type="project" value="UniProtKB"/>
</dbReference>
<dbReference type="GO" id="GO:0020037">
    <property type="term" value="F:heme binding"/>
    <property type="evidence" value="ECO:0000318"/>
    <property type="project" value="GO_Central"/>
</dbReference>
<dbReference type="GO" id="GO:0046872">
    <property type="term" value="F:metal ion binding"/>
    <property type="evidence" value="ECO:0007669"/>
    <property type="project" value="UniProtKB-KW"/>
</dbReference>
<dbReference type="GO" id="GO:0019825">
    <property type="term" value="F:oxygen binding"/>
    <property type="evidence" value="ECO:0000318"/>
    <property type="project" value="GO_Central"/>
</dbReference>
<dbReference type="GO" id="GO:0005344">
    <property type="term" value="F:oxygen carrier activity"/>
    <property type="evidence" value="ECO:0000250"/>
    <property type="project" value="UniProtKB"/>
</dbReference>
<dbReference type="GO" id="GO:0098869">
    <property type="term" value="P:cellular oxidant detoxification"/>
    <property type="evidence" value="ECO:0007669"/>
    <property type="project" value="GOC"/>
</dbReference>
<dbReference type="GO" id="GO:0030097">
    <property type="term" value="P:hemopoiesis"/>
    <property type="evidence" value="ECO:0000250"/>
    <property type="project" value="UniProtKB"/>
</dbReference>
<dbReference type="GO" id="GO:0042744">
    <property type="term" value="P:hydrogen peroxide catabolic process"/>
    <property type="evidence" value="ECO:0000318"/>
    <property type="project" value="GO_Central"/>
</dbReference>
<dbReference type="GO" id="GO:0015671">
    <property type="term" value="P:oxygen transport"/>
    <property type="evidence" value="ECO:0000250"/>
    <property type="project" value="UniProtKB"/>
</dbReference>
<dbReference type="CDD" id="cd08925">
    <property type="entry name" value="Hb-beta-like"/>
    <property type="match status" value="1"/>
</dbReference>
<dbReference type="FunFam" id="1.10.490.10:FF:000001">
    <property type="entry name" value="Hemoglobin subunit beta"/>
    <property type="match status" value="1"/>
</dbReference>
<dbReference type="Gene3D" id="1.10.490.10">
    <property type="entry name" value="Globins"/>
    <property type="match status" value="1"/>
</dbReference>
<dbReference type="InterPro" id="IPR000971">
    <property type="entry name" value="Globin"/>
</dbReference>
<dbReference type="InterPro" id="IPR009050">
    <property type="entry name" value="Globin-like_sf"/>
</dbReference>
<dbReference type="InterPro" id="IPR012292">
    <property type="entry name" value="Globin/Proto"/>
</dbReference>
<dbReference type="InterPro" id="IPR002337">
    <property type="entry name" value="Hemoglobin_b"/>
</dbReference>
<dbReference type="InterPro" id="IPR050056">
    <property type="entry name" value="Hemoglobin_oxygen_transport"/>
</dbReference>
<dbReference type="PANTHER" id="PTHR11442">
    <property type="entry name" value="HEMOGLOBIN FAMILY MEMBER"/>
    <property type="match status" value="1"/>
</dbReference>
<dbReference type="PANTHER" id="PTHR11442:SF102">
    <property type="entry name" value="HEMOGLOBIN SUBUNIT BETA-1-RELATED"/>
    <property type="match status" value="1"/>
</dbReference>
<dbReference type="Pfam" id="PF00042">
    <property type="entry name" value="Globin"/>
    <property type="match status" value="1"/>
</dbReference>
<dbReference type="PRINTS" id="PR00814">
    <property type="entry name" value="BETAHAEM"/>
</dbReference>
<dbReference type="SUPFAM" id="SSF46458">
    <property type="entry name" value="Globin-like"/>
    <property type="match status" value="1"/>
</dbReference>
<dbReference type="PROSITE" id="PS01033">
    <property type="entry name" value="GLOBIN"/>
    <property type="match status" value="1"/>
</dbReference>
<accession>Q90485</accession>
<accession>Q7SZW0</accession>
<accession>Q7T3C2</accession>
<name>HBB2_DANRE</name>
<gene>
    <name type="primary">ba2</name>
    <name type="ORF">si:dz118j2.3</name>
</gene>
<gene>
    <name type="primary">ba2l</name>
    <name type="ORF">si:dz118j2.1</name>
    <name type="ORF">zgc:92900</name>
</gene>
<organism>
    <name type="scientific">Danio rerio</name>
    <name type="common">Zebrafish</name>
    <name type="synonym">Brachydanio rerio</name>
    <dbReference type="NCBI Taxonomy" id="7955"/>
    <lineage>
        <taxon>Eukaryota</taxon>
        <taxon>Metazoa</taxon>
        <taxon>Chordata</taxon>
        <taxon>Craniata</taxon>
        <taxon>Vertebrata</taxon>
        <taxon>Euteleostomi</taxon>
        <taxon>Actinopterygii</taxon>
        <taxon>Neopterygii</taxon>
        <taxon>Teleostei</taxon>
        <taxon>Ostariophysi</taxon>
        <taxon>Cypriniformes</taxon>
        <taxon>Danionidae</taxon>
        <taxon>Danioninae</taxon>
        <taxon>Danio</taxon>
    </lineage>
</organism>